<proteinExistence type="inferred from homology"/>
<gene>
    <name evidence="1" type="primary">PFA4</name>
    <name type="ORF">FGRRES_01411</name>
    <name type="ORF">FGSG_01411</name>
</gene>
<comment type="function">
    <text evidence="1">Mediates the reversible addition of palmitate to target proteins, thereby regulating their membrane association and biological function.</text>
</comment>
<comment type="catalytic activity">
    <reaction evidence="1">
        <text>L-cysteinyl-[protein] + hexadecanoyl-CoA = S-hexadecanoyl-L-cysteinyl-[protein] + CoA</text>
        <dbReference type="Rhea" id="RHEA:36683"/>
        <dbReference type="Rhea" id="RHEA-COMP:10131"/>
        <dbReference type="Rhea" id="RHEA-COMP:11032"/>
        <dbReference type="ChEBI" id="CHEBI:29950"/>
        <dbReference type="ChEBI" id="CHEBI:57287"/>
        <dbReference type="ChEBI" id="CHEBI:57379"/>
        <dbReference type="ChEBI" id="CHEBI:74151"/>
        <dbReference type="EC" id="2.3.1.225"/>
    </reaction>
</comment>
<comment type="subcellular location">
    <subcellularLocation>
        <location evidence="1">Endoplasmic reticulum membrane</location>
        <topology evidence="1">Multi-pass membrane protein</topology>
    </subcellularLocation>
</comment>
<comment type="domain">
    <text evidence="1">The DHHC domain is required for palmitoyltransferase activity.</text>
</comment>
<comment type="similarity">
    <text evidence="1">Belongs to the DHHC palmitoyltransferase family. PFA4 subfamily.</text>
</comment>
<sequence>MAGLNDVPFIKGLAVPSVCALIIFLGYASQFLFNYSTTLEPGPPTRRETIIFNGLLLVLWITYYRTVATDPGRYIFKDRVIEAEGQRWCNKCAAPKPPRAHHCRHCARCVPRMDHHCPWTRNCVSMTTFPHFLRFLIYTNMSLWMLGYFLWQRFSKIWEHRRLPAYLGPSFYGLICLSLISIVNFVTTVALGIMLINTVKSWVFNQTMIEGWEQERHEALMDKGPKEWWDIMGPDGEKVRFERLEFPYDIGFFSNMAQAMGTHNVLLWFFPFAGNPTVAKDGNGQGWTWEENGFNRIEGLWPPPDPDKLRRAARGWPAGNRNYAEELRQANMSSSEYKAGFLKRQADDEKRKRHLMAELEEVDDFDMYDDEEYDRELDQGLGWVNSDGDRLRDYGVDEEASEPEGVNDDDDDDDDDDVPLAELIRRRKILKKDGLDD</sequence>
<evidence type="ECO:0000255" key="1">
    <source>
        <dbReference type="HAMAP-Rule" id="MF_03199"/>
    </source>
</evidence>
<evidence type="ECO:0000255" key="2">
    <source>
        <dbReference type="PROSITE-ProRule" id="PRU00067"/>
    </source>
</evidence>
<evidence type="ECO:0000256" key="3">
    <source>
        <dbReference type="SAM" id="MobiDB-lite"/>
    </source>
</evidence>
<keyword id="KW-0012">Acyltransferase</keyword>
<keyword id="KW-0256">Endoplasmic reticulum</keyword>
<keyword id="KW-0449">Lipoprotein</keyword>
<keyword id="KW-0472">Membrane</keyword>
<keyword id="KW-0564">Palmitate</keyword>
<keyword id="KW-1185">Reference proteome</keyword>
<keyword id="KW-0808">Transferase</keyword>
<keyword id="KW-0812">Transmembrane</keyword>
<keyword id="KW-1133">Transmembrane helix</keyword>
<feature type="chain" id="PRO_0000212967" description="Palmitoyltransferase PFA4">
    <location>
        <begin position="1"/>
        <end position="437"/>
    </location>
</feature>
<feature type="topological domain" description="Cytoplasmic" evidence="1">
    <location>
        <begin position="1"/>
        <end position="12"/>
    </location>
</feature>
<feature type="transmembrane region" description="Helical" evidence="1">
    <location>
        <begin position="13"/>
        <end position="33"/>
    </location>
</feature>
<feature type="topological domain" description="Lumenal" evidence="1">
    <location>
        <begin position="34"/>
        <end position="48"/>
    </location>
</feature>
<feature type="transmembrane region" description="Helical" evidence="1">
    <location>
        <begin position="49"/>
        <end position="69"/>
    </location>
</feature>
<feature type="topological domain" description="Cytoplasmic" evidence="1">
    <location>
        <begin position="70"/>
        <end position="130"/>
    </location>
</feature>
<feature type="transmembrane region" description="Helical" evidence="1">
    <location>
        <begin position="131"/>
        <end position="151"/>
    </location>
</feature>
<feature type="topological domain" description="Lumenal" evidence="1">
    <location>
        <begin position="152"/>
        <end position="173"/>
    </location>
</feature>
<feature type="transmembrane region" description="Helical" evidence="1">
    <location>
        <begin position="174"/>
        <end position="194"/>
    </location>
</feature>
<feature type="topological domain" description="Cytoplasmic" evidence="1">
    <location>
        <begin position="195"/>
        <end position="437"/>
    </location>
</feature>
<feature type="domain" description="DHHC" evidence="2">
    <location>
        <begin position="87"/>
        <end position="137"/>
    </location>
</feature>
<feature type="region of interest" description="Disordered" evidence="3">
    <location>
        <begin position="377"/>
        <end position="419"/>
    </location>
</feature>
<feature type="compositionally biased region" description="Acidic residues" evidence="3">
    <location>
        <begin position="396"/>
        <end position="419"/>
    </location>
</feature>
<feature type="active site" description="S-palmitoyl cysteine intermediate" evidence="1">
    <location>
        <position position="117"/>
    </location>
</feature>
<name>PFA4_GIBZE</name>
<dbReference type="EC" id="2.3.1.225" evidence="1"/>
<dbReference type="EMBL" id="DS231663">
    <property type="protein sequence ID" value="ESU06724.1"/>
    <property type="molecule type" value="Genomic_DNA"/>
</dbReference>
<dbReference type="EMBL" id="HG970332">
    <property type="protein sequence ID" value="CEF73539.1"/>
    <property type="molecule type" value="Genomic_DNA"/>
</dbReference>
<dbReference type="RefSeq" id="XP_011317209.1">
    <property type="nucleotide sequence ID" value="XM_011318907.1"/>
</dbReference>
<dbReference type="FunCoup" id="Q4IMZ7">
    <property type="interactions" value="33"/>
</dbReference>
<dbReference type="STRING" id="229533.Q4IMZ7"/>
<dbReference type="GeneID" id="23548852"/>
<dbReference type="KEGG" id="fgr:FGSG_01411"/>
<dbReference type="VEuPathDB" id="FungiDB:FGRAMPH1_01G03467"/>
<dbReference type="eggNOG" id="KOG1314">
    <property type="taxonomic scope" value="Eukaryota"/>
</dbReference>
<dbReference type="HOGENOM" id="CLU_027721_8_1_1"/>
<dbReference type="InParanoid" id="Q4IMZ7"/>
<dbReference type="OrthoDB" id="124757at110618"/>
<dbReference type="PHI-base" id="PHI:1673"/>
<dbReference type="Proteomes" id="UP000070720">
    <property type="component" value="Chromosome 1"/>
</dbReference>
<dbReference type="GO" id="GO:0005789">
    <property type="term" value="C:endoplasmic reticulum membrane"/>
    <property type="evidence" value="ECO:0007669"/>
    <property type="project" value="UniProtKB-SubCell"/>
</dbReference>
<dbReference type="GO" id="GO:0019706">
    <property type="term" value="F:protein-cysteine S-palmitoyltransferase activity"/>
    <property type="evidence" value="ECO:0007669"/>
    <property type="project" value="UniProtKB-UniRule"/>
</dbReference>
<dbReference type="HAMAP" id="MF_03199">
    <property type="entry name" value="DHHC_PAT_PFA4"/>
    <property type="match status" value="1"/>
</dbReference>
<dbReference type="InterPro" id="IPR001594">
    <property type="entry name" value="Palmitoyltrfase_DHHC"/>
</dbReference>
<dbReference type="InterPro" id="IPR033682">
    <property type="entry name" value="PFA4"/>
</dbReference>
<dbReference type="InterPro" id="IPR039859">
    <property type="entry name" value="PFA4/ZDH16/20/ERF2-like"/>
</dbReference>
<dbReference type="PANTHER" id="PTHR12246">
    <property type="entry name" value="PALMITOYLTRANSFERASE ZDHHC16"/>
    <property type="match status" value="1"/>
</dbReference>
<dbReference type="Pfam" id="PF01529">
    <property type="entry name" value="DHHC"/>
    <property type="match status" value="1"/>
</dbReference>
<dbReference type="PROSITE" id="PS50216">
    <property type="entry name" value="DHHC"/>
    <property type="match status" value="1"/>
</dbReference>
<accession>Q4IMZ7</accession>
<accession>A0A098D3I0</accession>
<accession>A0A0E0RQL4</accession>
<accession>V6QXQ9</accession>
<organism>
    <name type="scientific">Gibberella zeae (strain ATCC MYA-4620 / CBS 123657 / FGSC 9075 / NRRL 31084 / PH-1)</name>
    <name type="common">Wheat head blight fungus</name>
    <name type="synonym">Fusarium graminearum</name>
    <dbReference type="NCBI Taxonomy" id="229533"/>
    <lineage>
        <taxon>Eukaryota</taxon>
        <taxon>Fungi</taxon>
        <taxon>Dikarya</taxon>
        <taxon>Ascomycota</taxon>
        <taxon>Pezizomycotina</taxon>
        <taxon>Sordariomycetes</taxon>
        <taxon>Hypocreomycetidae</taxon>
        <taxon>Hypocreales</taxon>
        <taxon>Nectriaceae</taxon>
        <taxon>Fusarium</taxon>
    </lineage>
</organism>
<reference key="1">
    <citation type="journal article" date="2007" name="Science">
        <title>The Fusarium graminearum genome reveals a link between localized polymorphism and pathogen specialization.</title>
        <authorList>
            <person name="Cuomo C.A."/>
            <person name="Gueldener U."/>
            <person name="Xu J.-R."/>
            <person name="Trail F."/>
            <person name="Turgeon B.G."/>
            <person name="Di Pietro A."/>
            <person name="Walton J.D."/>
            <person name="Ma L.-J."/>
            <person name="Baker S.E."/>
            <person name="Rep M."/>
            <person name="Adam G."/>
            <person name="Antoniw J."/>
            <person name="Baldwin T."/>
            <person name="Calvo S.E."/>
            <person name="Chang Y.-L."/>
            <person name="DeCaprio D."/>
            <person name="Gale L.R."/>
            <person name="Gnerre S."/>
            <person name="Goswami R.S."/>
            <person name="Hammond-Kosack K."/>
            <person name="Harris L.J."/>
            <person name="Hilburn K."/>
            <person name="Kennell J.C."/>
            <person name="Kroken S."/>
            <person name="Magnuson J.K."/>
            <person name="Mannhaupt G."/>
            <person name="Mauceli E.W."/>
            <person name="Mewes H.-W."/>
            <person name="Mitterbauer R."/>
            <person name="Muehlbauer G."/>
            <person name="Muensterkoetter M."/>
            <person name="Nelson D."/>
            <person name="O'Donnell K."/>
            <person name="Ouellet T."/>
            <person name="Qi W."/>
            <person name="Quesneville H."/>
            <person name="Roncero M.I.G."/>
            <person name="Seong K.-Y."/>
            <person name="Tetko I.V."/>
            <person name="Urban M."/>
            <person name="Waalwijk C."/>
            <person name="Ward T.J."/>
            <person name="Yao J."/>
            <person name="Birren B.W."/>
            <person name="Kistler H.C."/>
        </authorList>
    </citation>
    <scope>NUCLEOTIDE SEQUENCE [LARGE SCALE GENOMIC DNA]</scope>
    <source>
        <strain>ATCC MYA-4620 / CBS 123657 / FGSC 9075 / NRRL 31084 / PH-1</strain>
    </source>
</reference>
<reference key="2">
    <citation type="journal article" date="2010" name="Nature">
        <title>Comparative genomics reveals mobile pathogenicity chromosomes in Fusarium.</title>
        <authorList>
            <person name="Ma L.-J."/>
            <person name="van der Does H.C."/>
            <person name="Borkovich K.A."/>
            <person name="Coleman J.J."/>
            <person name="Daboussi M.-J."/>
            <person name="Di Pietro A."/>
            <person name="Dufresne M."/>
            <person name="Freitag M."/>
            <person name="Grabherr M."/>
            <person name="Henrissat B."/>
            <person name="Houterman P.M."/>
            <person name="Kang S."/>
            <person name="Shim W.-B."/>
            <person name="Woloshuk C."/>
            <person name="Xie X."/>
            <person name="Xu J.-R."/>
            <person name="Antoniw J."/>
            <person name="Baker S.E."/>
            <person name="Bluhm B.H."/>
            <person name="Breakspear A."/>
            <person name="Brown D.W."/>
            <person name="Butchko R.A.E."/>
            <person name="Chapman S."/>
            <person name="Coulson R."/>
            <person name="Coutinho P.M."/>
            <person name="Danchin E.G.J."/>
            <person name="Diener A."/>
            <person name="Gale L.R."/>
            <person name="Gardiner D.M."/>
            <person name="Goff S."/>
            <person name="Hammond-Kosack K.E."/>
            <person name="Hilburn K."/>
            <person name="Hua-Van A."/>
            <person name="Jonkers W."/>
            <person name="Kazan K."/>
            <person name="Kodira C.D."/>
            <person name="Koehrsen M."/>
            <person name="Kumar L."/>
            <person name="Lee Y.-H."/>
            <person name="Li L."/>
            <person name="Manners J.M."/>
            <person name="Miranda-Saavedra D."/>
            <person name="Mukherjee M."/>
            <person name="Park G."/>
            <person name="Park J."/>
            <person name="Park S.-Y."/>
            <person name="Proctor R.H."/>
            <person name="Regev A."/>
            <person name="Ruiz-Roldan M.C."/>
            <person name="Sain D."/>
            <person name="Sakthikumar S."/>
            <person name="Sykes S."/>
            <person name="Schwartz D.C."/>
            <person name="Turgeon B.G."/>
            <person name="Wapinski I."/>
            <person name="Yoder O."/>
            <person name="Young S."/>
            <person name="Zeng Q."/>
            <person name="Zhou S."/>
            <person name="Galagan J."/>
            <person name="Cuomo C.A."/>
            <person name="Kistler H.C."/>
            <person name="Rep M."/>
        </authorList>
    </citation>
    <scope>GENOME REANNOTATION</scope>
    <source>
        <strain>ATCC MYA-4620 / CBS 123657 / FGSC 9075 / NRRL 31084 / PH-1</strain>
    </source>
</reference>
<reference key="3">
    <citation type="journal article" date="2015" name="BMC Genomics">
        <title>The completed genome sequence of the pathogenic ascomycete fungus Fusarium graminearum.</title>
        <authorList>
            <person name="King R."/>
            <person name="Urban M."/>
            <person name="Hammond-Kosack M.C.U."/>
            <person name="Hassani-Pak K."/>
            <person name="Hammond-Kosack K.E."/>
        </authorList>
    </citation>
    <scope>NUCLEOTIDE SEQUENCE [LARGE SCALE GENOMIC DNA]</scope>
    <source>
        <strain>ATCC MYA-4620 / CBS 123657 / FGSC 9075 / NRRL 31084 / PH-1</strain>
    </source>
</reference>
<protein>
    <recommendedName>
        <fullName evidence="1">Palmitoyltransferase PFA4</fullName>
        <ecNumber evidence="1">2.3.1.225</ecNumber>
    </recommendedName>
    <alternativeName>
        <fullName evidence="1">Protein S-acyltransferase</fullName>
        <shortName evidence="1">PAT</shortName>
    </alternativeName>
    <alternativeName>
        <fullName evidence="1">Protein fatty acyltransferase 4</fullName>
    </alternativeName>
</protein>